<proteinExistence type="inferred from homology"/>
<reference key="1">
    <citation type="journal article" date="2005" name="Nat. Biotechnol.">
        <title>Complete genome sequence of the plant commensal Pseudomonas fluorescens Pf-5.</title>
        <authorList>
            <person name="Paulsen I.T."/>
            <person name="Press C.M."/>
            <person name="Ravel J."/>
            <person name="Kobayashi D.Y."/>
            <person name="Myers G.S.A."/>
            <person name="Mavrodi D.V."/>
            <person name="DeBoy R.T."/>
            <person name="Seshadri R."/>
            <person name="Ren Q."/>
            <person name="Madupu R."/>
            <person name="Dodson R.J."/>
            <person name="Durkin A.S."/>
            <person name="Brinkac L.M."/>
            <person name="Daugherty S.C."/>
            <person name="Sullivan S.A."/>
            <person name="Rosovitz M.J."/>
            <person name="Gwinn M.L."/>
            <person name="Zhou L."/>
            <person name="Schneider D.J."/>
            <person name="Cartinhour S.W."/>
            <person name="Nelson W.C."/>
            <person name="Weidman J."/>
            <person name="Watkins K."/>
            <person name="Tran K."/>
            <person name="Khouri H."/>
            <person name="Pierson E.A."/>
            <person name="Pierson L.S. III"/>
            <person name="Thomashow L.S."/>
            <person name="Loper J.E."/>
        </authorList>
    </citation>
    <scope>NUCLEOTIDE SEQUENCE [LARGE SCALE GENOMIC DNA]</scope>
    <source>
        <strain>ATCC BAA-477 / NRRL B-23932 / Pf-5</strain>
    </source>
</reference>
<protein>
    <recommendedName>
        <fullName evidence="1">Sulfate adenylyltransferase subunit 2</fullName>
        <ecNumber evidence="1">2.7.7.4</ecNumber>
    </recommendedName>
    <alternativeName>
        <fullName evidence="1">ATP-sulfurylase small subunit</fullName>
    </alternativeName>
    <alternativeName>
        <fullName evidence="1">Sulfate adenylate transferase</fullName>
        <shortName evidence="1">SAT</shortName>
    </alternativeName>
</protein>
<accession>Q4KI67</accession>
<sequence>MVDKLTHLKQLEAESIHIIREVAAEFDNPVMLYSIGKDSAVMLHLARKAFFPGKLPFPVMHVDTQWKFQEMYKFRDRMVEELGLDLITHVNPDGVAQGINPFTHGSAKHTDIMKTEGLKQALDKHGFDAAFGGARRDEEKSRAKERVYSFRDSKHRWDPKNQRPELWNVYNGKVNKGESIRVFPLSNWTELDIWQYIYLEGIPIVPLYFAAEREVIEKNGTLIMIDDERILEHLSDEEKARIVKKKVRFRTLGCYPLTGAVESEAESLTDIIQEMLLTRTSERQGRVIDHDGAGSMEDKKRQGYF</sequence>
<name>CYSD_PSEF5</name>
<keyword id="KW-0067">ATP-binding</keyword>
<keyword id="KW-0547">Nucleotide-binding</keyword>
<keyword id="KW-0548">Nucleotidyltransferase</keyword>
<keyword id="KW-0808">Transferase</keyword>
<comment type="function">
    <text evidence="1">With CysN forms the ATP sulfurylase (ATPS) that catalyzes the adenylation of sulfate producing adenosine 5'-phosphosulfate (APS) and diphosphate, the first enzymatic step in sulfur assimilation pathway. APS synthesis involves the formation of a high-energy phosphoric-sulfuric acid anhydride bond driven by GTP hydrolysis by CysN coupled to ATP hydrolysis by CysD.</text>
</comment>
<comment type="catalytic activity">
    <reaction evidence="1">
        <text>sulfate + ATP + H(+) = adenosine 5'-phosphosulfate + diphosphate</text>
        <dbReference type="Rhea" id="RHEA:18133"/>
        <dbReference type="ChEBI" id="CHEBI:15378"/>
        <dbReference type="ChEBI" id="CHEBI:16189"/>
        <dbReference type="ChEBI" id="CHEBI:30616"/>
        <dbReference type="ChEBI" id="CHEBI:33019"/>
        <dbReference type="ChEBI" id="CHEBI:58243"/>
        <dbReference type="EC" id="2.7.7.4"/>
    </reaction>
</comment>
<comment type="pathway">
    <text evidence="1">Sulfur metabolism; hydrogen sulfide biosynthesis; sulfite from sulfate: step 1/3.</text>
</comment>
<comment type="subunit">
    <text evidence="1">Heterodimer composed of CysD, the smaller subunit, and CysN.</text>
</comment>
<comment type="similarity">
    <text evidence="1">Belongs to the PAPS reductase family. CysD subfamily.</text>
</comment>
<gene>
    <name evidence="1" type="primary">cysD</name>
    <name type="ordered locus">PFL_0935</name>
</gene>
<dbReference type="EC" id="2.7.7.4" evidence="1"/>
<dbReference type="EMBL" id="CP000076">
    <property type="protein sequence ID" value="AAY90222.1"/>
    <property type="molecule type" value="Genomic_DNA"/>
</dbReference>
<dbReference type="RefSeq" id="WP_011059289.1">
    <property type="nucleotide sequence ID" value="NC_004129.6"/>
</dbReference>
<dbReference type="SMR" id="Q4KI67"/>
<dbReference type="STRING" id="220664.PFL_0935"/>
<dbReference type="GeneID" id="57473938"/>
<dbReference type="KEGG" id="pfl:PFL_0935"/>
<dbReference type="PATRIC" id="fig|220664.5.peg.958"/>
<dbReference type="eggNOG" id="COG0175">
    <property type="taxonomic scope" value="Bacteria"/>
</dbReference>
<dbReference type="HOGENOM" id="CLU_043026_0_0_6"/>
<dbReference type="UniPathway" id="UPA00140">
    <property type="reaction ID" value="UER00204"/>
</dbReference>
<dbReference type="Proteomes" id="UP000008540">
    <property type="component" value="Chromosome"/>
</dbReference>
<dbReference type="GO" id="GO:0005524">
    <property type="term" value="F:ATP binding"/>
    <property type="evidence" value="ECO:0007669"/>
    <property type="project" value="UniProtKB-KW"/>
</dbReference>
<dbReference type="GO" id="GO:0004781">
    <property type="term" value="F:sulfate adenylyltransferase (ATP) activity"/>
    <property type="evidence" value="ECO:0007669"/>
    <property type="project" value="UniProtKB-UniRule"/>
</dbReference>
<dbReference type="GO" id="GO:0070814">
    <property type="term" value="P:hydrogen sulfide biosynthetic process"/>
    <property type="evidence" value="ECO:0007669"/>
    <property type="project" value="UniProtKB-UniRule"/>
</dbReference>
<dbReference type="GO" id="GO:0000103">
    <property type="term" value="P:sulfate assimilation"/>
    <property type="evidence" value="ECO:0007669"/>
    <property type="project" value="UniProtKB-UniRule"/>
</dbReference>
<dbReference type="CDD" id="cd23946">
    <property type="entry name" value="Sulfate_adenylyltransferase_2"/>
    <property type="match status" value="1"/>
</dbReference>
<dbReference type="FunFam" id="3.40.50.620:FF:000002">
    <property type="entry name" value="Sulfate adenylyltransferase subunit 2"/>
    <property type="match status" value="1"/>
</dbReference>
<dbReference type="Gene3D" id="3.40.50.620">
    <property type="entry name" value="HUPs"/>
    <property type="match status" value="1"/>
</dbReference>
<dbReference type="HAMAP" id="MF_00064">
    <property type="entry name" value="Sulf_adenylyltr_sub2"/>
    <property type="match status" value="1"/>
</dbReference>
<dbReference type="InterPro" id="IPR002500">
    <property type="entry name" value="PAPS_reduct_dom"/>
</dbReference>
<dbReference type="InterPro" id="IPR014729">
    <property type="entry name" value="Rossmann-like_a/b/a_fold"/>
</dbReference>
<dbReference type="InterPro" id="IPR011784">
    <property type="entry name" value="SO4_adenylTrfase_ssu"/>
</dbReference>
<dbReference type="InterPro" id="IPR050128">
    <property type="entry name" value="Sulfate_adenylyltrnsfr_sub2"/>
</dbReference>
<dbReference type="NCBIfam" id="TIGR02039">
    <property type="entry name" value="CysD"/>
    <property type="match status" value="1"/>
</dbReference>
<dbReference type="NCBIfam" id="NF003587">
    <property type="entry name" value="PRK05253.1"/>
    <property type="match status" value="1"/>
</dbReference>
<dbReference type="NCBIfam" id="NF009214">
    <property type="entry name" value="PRK12563.1"/>
    <property type="match status" value="1"/>
</dbReference>
<dbReference type="PANTHER" id="PTHR43196">
    <property type="entry name" value="SULFATE ADENYLYLTRANSFERASE SUBUNIT 2"/>
    <property type="match status" value="1"/>
</dbReference>
<dbReference type="PANTHER" id="PTHR43196:SF1">
    <property type="entry name" value="SULFATE ADENYLYLTRANSFERASE SUBUNIT 2"/>
    <property type="match status" value="1"/>
</dbReference>
<dbReference type="Pfam" id="PF01507">
    <property type="entry name" value="PAPS_reduct"/>
    <property type="match status" value="1"/>
</dbReference>
<dbReference type="PIRSF" id="PIRSF002936">
    <property type="entry name" value="CysDAde_trans"/>
    <property type="match status" value="1"/>
</dbReference>
<dbReference type="SUPFAM" id="SSF52402">
    <property type="entry name" value="Adenine nucleotide alpha hydrolases-like"/>
    <property type="match status" value="1"/>
</dbReference>
<feature type="chain" id="PRO_1000008969" description="Sulfate adenylyltransferase subunit 2">
    <location>
        <begin position="1"/>
        <end position="305"/>
    </location>
</feature>
<organism>
    <name type="scientific">Pseudomonas fluorescens (strain ATCC BAA-477 / NRRL B-23932 / Pf-5)</name>
    <dbReference type="NCBI Taxonomy" id="220664"/>
    <lineage>
        <taxon>Bacteria</taxon>
        <taxon>Pseudomonadati</taxon>
        <taxon>Pseudomonadota</taxon>
        <taxon>Gammaproteobacteria</taxon>
        <taxon>Pseudomonadales</taxon>
        <taxon>Pseudomonadaceae</taxon>
        <taxon>Pseudomonas</taxon>
    </lineage>
</organism>
<evidence type="ECO:0000255" key="1">
    <source>
        <dbReference type="HAMAP-Rule" id="MF_00064"/>
    </source>
</evidence>